<name>MEK1_SCHPO</name>
<evidence type="ECO:0000255" key="1">
    <source>
        <dbReference type="PROSITE-ProRule" id="PRU00086"/>
    </source>
</evidence>
<evidence type="ECO:0000255" key="2">
    <source>
        <dbReference type="PROSITE-ProRule" id="PRU00159"/>
    </source>
</evidence>
<evidence type="ECO:0000255" key="3">
    <source>
        <dbReference type="PROSITE-ProRule" id="PRU10027"/>
    </source>
</evidence>
<evidence type="ECO:0000305" key="4"/>
<comment type="function">
    <text>Probable protein kinase required for meiotic recombination.</text>
</comment>
<comment type="catalytic activity">
    <reaction>
        <text>L-seryl-[protein] + ATP = O-phospho-L-seryl-[protein] + ADP + H(+)</text>
        <dbReference type="Rhea" id="RHEA:17989"/>
        <dbReference type="Rhea" id="RHEA-COMP:9863"/>
        <dbReference type="Rhea" id="RHEA-COMP:11604"/>
        <dbReference type="ChEBI" id="CHEBI:15378"/>
        <dbReference type="ChEBI" id="CHEBI:29999"/>
        <dbReference type="ChEBI" id="CHEBI:30616"/>
        <dbReference type="ChEBI" id="CHEBI:83421"/>
        <dbReference type="ChEBI" id="CHEBI:456216"/>
        <dbReference type="EC" id="2.7.11.1"/>
    </reaction>
</comment>
<comment type="catalytic activity">
    <reaction>
        <text>L-threonyl-[protein] + ATP = O-phospho-L-threonyl-[protein] + ADP + H(+)</text>
        <dbReference type="Rhea" id="RHEA:46608"/>
        <dbReference type="Rhea" id="RHEA-COMP:11060"/>
        <dbReference type="Rhea" id="RHEA-COMP:11605"/>
        <dbReference type="ChEBI" id="CHEBI:15378"/>
        <dbReference type="ChEBI" id="CHEBI:30013"/>
        <dbReference type="ChEBI" id="CHEBI:30616"/>
        <dbReference type="ChEBI" id="CHEBI:61977"/>
        <dbReference type="ChEBI" id="CHEBI:456216"/>
        <dbReference type="EC" id="2.7.11.1"/>
    </reaction>
</comment>
<comment type="similarity">
    <text evidence="4">Belongs to the protein kinase superfamily. CAMK Ser/Thr protein kinase family. CHEK2 subfamily.</text>
</comment>
<organism>
    <name type="scientific">Schizosaccharomyces pombe (strain 972 / ATCC 24843)</name>
    <name type="common">Fission yeast</name>
    <dbReference type="NCBI Taxonomy" id="284812"/>
    <lineage>
        <taxon>Eukaryota</taxon>
        <taxon>Fungi</taxon>
        <taxon>Dikarya</taxon>
        <taxon>Ascomycota</taxon>
        <taxon>Taphrinomycotina</taxon>
        <taxon>Schizosaccharomycetes</taxon>
        <taxon>Schizosaccharomycetales</taxon>
        <taxon>Schizosaccharomycetaceae</taxon>
        <taxon>Schizosaccharomyces</taxon>
    </lineage>
</organism>
<accession>Q10292</accession>
<dbReference type="EC" id="2.7.11.1"/>
<dbReference type="EMBL" id="Z71478">
    <property type="protein sequence ID" value="CAA96101.1"/>
    <property type="molecule type" value="Genomic_DNA"/>
</dbReference>
<dbReference type="EMBL" id="CU329670">
    <property type="protein sequence ID" value="CAB11196.1"/>
    <property type="molecule type" value="Genomic_DNA"/>
</dbReference>
<dbReference type="PIR" id="T43420">
    <property type="entry name" value="T43420"/>
</dbReference>
<dbReference type="RefSeq" id="NP_594908.1">
    <property type="nucleotide sequence ID" value="NM_001020340.1"/>
</dbReference>
<dbReference type="SMR" id="Q10292"/>
<dbReference type="BioGRID" id="278101">
    <property type="interactions" value="10"/>
</dbReference>
<dbReference type="FunCoup" id="Q10292">
    <property type="interactions" value="239"/>
</dbReference>
<dbReference type="STRING" id="284812.Q10292"/>
<dbReference type="iPTMnet" id="Q10292"/>
<dbReference type="PaxDb" id="4896-SPAC14C4.03.1"/>
<dbReference type="EnsemblFungi" id="SPAC14C4.03.1">
    <property type="protein sequence ID" value="SPAC14C4.03.1:pep"/>
    <property type="gene ID" value="SPAC14C4.03"/>
</dbReference>
<dbReference type="GeneID" id="2541604"/>
<dbReference type="KEGG" id="spo:2541604"/>
<dbReference type="PomBase" id="SPAC14C4.03">
    <property type="gene designation" value="mek1"/>
</dbReference>
<dbReference type="VEuPathDB" id="FungiDB:SPAC14C4.03"/>
<dbReference type="eggNOG" id="KOG0032">
    <property type="taxonomic scope" value="Eukaryota"/>
</dbReference>
<dbReference type="HOGENOM" id="CLU_000288_63_0_1"/>
<dbReference type="InParanoid" id="Q10292"/>
<dbReference type="OMA" id="HKHLGYV"/>
<dbReference type="PhylomeDB" id="Q10292"/>
<dbReference type="BRENDA" id="2.7.11.1">
    <property type="organism ID" value="5613"/>
</dbReference>
<dbReference type="Reactome" id="R-SPO-5693565">
    <property type="pathway name" value="Recruitment and ATM-mediated phosphorylation of repair and signaling proteins at DNA double strand breaks"/>
</dbReference>
<dbReference type="Reactome" id="R-SPO-69473">
    <property type="pathway name" value="G2/M DNA damage checkpoint"/>
</dbReference>
<dbReference type="Reactome" id="R-SPO-69601">
    <property type="pathway name" value="Ubiquitin Mediated Degradation of Phosphorylated Cdc25A"/>
</dbReference>
<dbReference type="Reactome" id="R-SPO-75035">
    <property type="pathway name" value="Chk1/Chk2(Cds1) mediated inactivation of Cyclin B:Cdk1 complex"/>
</dbReference>
<dbReference type="PRO" id="PR:Q10292"/>
<dbReference type="Proteomes" id="UP000002485">
    <property type="component" value="Chromosome I"/>
</dbReference>
<dbReference type="GO" id="GO:0005737">
    <property type="term" value="C:cytoplasm"/>
    <property type="evidence" value="ECO:0000318"/>
    <property type="project" value="GO_Central"/>
</dbReference>
<dbReference type="GO" id="GO:0005829">
    <property type="term" value="C:cytosol"/>
    <property type="evidence" value="ECO:0007005"/>
    <property type="project" value="PomBase"/>
</dbReference>
<dbReference type="GO" id="GO:0030998">
    <property type="term" value="C:linear element"/>
    <property type="evidence" value="ECO:0000314"/>
    <property type="project" value="PomBase"/>
</dbReference>
<dbReference type="GO" id="GO:0005634">
    <property type="term" value="C:nucleus"/>
    <property type="evidence" value="ECO:0007005"/>
    <property type="project" value="PomBase"/>
</dbReference>
<dbReference type="GO" id="GO:0005524">
    <property type="term" value="F:ATP binding"/>
    <property type="evidence" value="ECO:0000255"/>
    <property type="project" value="PomBase"/>
</dbReference>
<dbReference type="GO" id="GO:0106310">
    <property type="term" value="F:protein serine kinase activity"/>
    <property type="evidence" value="ECO:0007669"/>
    <property type="project" value="RHEA"/>
</dbReference>
<dbReference type="GO" id="GO:0004674">
    <property type="term" value="F:protein serine/threonine kinase activity"/>
    <property type="evidence" value="ECO:0000314"/>
    <property type="project" value="PomBase"/>
</dbReference>
<dbReference type="GO" id="GO:0051598">
    <property type="term" value="P:meiotic recombination checkpoint signaling"/>
    <property type="evidence" value="ECO:0000315"/>
    <property type="project" value="PomBase"/>
</dbReference>
<dbReference type="GO" id="GO:1904514">
    <property type="term" value="P:positive regulation of initiation of premeiotic DNA replication"/>
    <property type="evidence" value="ECO:0000315"/>
    <property type="project" value="PomBase"/>
</dbReference>
<dbReference type="GO" id="GO:0010845">
    <property type="term" value="P:positive regulation of reciprocal meiotic recombination"/>
    <property type="evidence" value="ECO:0000315"/>
    <property type="project" value="PomBase"/>
</dbReference>
<dbReference type="GO" id="GO:0007131">
    <property type="term" value="P:reciprocal meiotic recombination"/>
    <property type="evidence" value="ECO:0000315"/>
    <property type="project" value="PomBase"/>
</dbReference>
<dbReference type="CDD" id="cd22670">
    <property type="entry name" value="FHA_MEK1-like"/>
    <property type="match status" value="1"/>
</dbReference>
<dbReference type="CDD" id="cd05117">
    <property type="entry name" value="STKc_CAMK"/>
    <property type="match status" value="1"/>
</dbReference>
<dbReference type="Gene3D" id="2.60.200.20">
    <property type="match status" value="1"/>
</dbReference>
<dbReference type="Gene3D" id="3.30.200.20">
    <property type="entry name" value="Phosphorylase Kinase, domain 1"/>
    <property type="match status" value="1"/>
</dbReference>
<dbReference type="Gene3D" id="1.10.510.10">
    <property type="entry name" value="Transferase(Phosphotransferase) domain 1"/>
    <property type="match status" value="1"/>
</dbReference>
<dbReference type="InterPro" id="IPR000253">
    <property type="entry name" value="FHA_dom"/>
</dbReference>
<dbReference type="InterPro" id="IPR011009">
    <property type="entry name" value="Kinase-like_dom_sf"/>
</dbReference>
<dbReference type="InterPro" id="IPR000719">
    <property type="entry name" value="Prot_kinase_dom"/>
</dbReference>
<dbReference type="InterPro" id="IPR017441">
    <property type="entry name" value="Protein_kinase_ATP_BS"/>
</dbReference>
<dbReference type="InterPro" id="IPR008271">
    <property type="entry name" value="Ser/Thr_kinase_AS"/>
</dbReference>
<dbReference type="InterPro" id="IPR008984">
    <property type="entry name" value="SMAD_FHA_dom_sf"/>
</dbReference>
<dbReference type="PANTHER" id="PTHR24347">
    <property type="entry name" value="SERINE/THREONINE-PROTEIN KINASE"/>
    <property type="match status" value="1"/>
</dbReference>
<dbReference type="Pfam" id="PF00498">
    <property type="entry name" value="FHA"/>
    <property type="match status" value="1"/>
</dbReference>
<dbReference type="Pfam" id="PF00069">
    <property type="entry name" value="Pkinase"/>
    <property type="match status" value="1"/>
</dbReference>
<dbReference type="SMART" id="SM00240">
    <property type="entry name" value="FHA"/>
    <property type="match status" value="1"/>
</dbReference>
<dbReference type="SMART" id="SM00220">
    <property type="entry name" value="S_TKc"/>
    <property type="match status" value="1"/>
</dbReference>
<dbReference type="SUPFAM" id="SSF56112">
    <property type="entry name" value="Protein kinase-like (PK-like)"/>
    <property type="match status" value="1"/>
</dbReference>
<dbReference type="SUPFAM" id="SSF49879">
    <property type="entry name" value="SMAD/FHA domain"/>
    <property type="match status" value="1"/>
</dbReference>
<dbReference type="PROSITE" id="PS50006">
    <property type="entry name" value="FHA_DOMAIN"/>
    <property type="match status" value="1"/>
</dbReference>
<dbReference type="PROSITE" id="PS00107">
    <property type="entry name" value="PROTEIN_KINASE_ATP"/>
    <property type="match status" value="1"/>
</dbReference>
<dbReference type="PROSITE" id="PS50011">
    <property type="entry name" value="PROTEIN_KINASE_DOM"/>
    <property type="match status" value="1"/>
</dbReference>
<dbReference type="PROSITE" id="PS00108">
    <property type="entry name" value="PROTEIN_KINASE_ST"/>
    <property type="match status" value="1"/>
</dbReference>
<reference key="1">
    <citation type="submission" date="1996-07" db="EMBL/GenBank/DDBJ databases">
        <authorList>
            <person name="Lyne M.H."/>
            <person name="Bryant J.A."/>
            <person name="Aves S.J."/>
        </authorList>
    </citation>
    <scope>NUCLEOTIDE SEQUENCE [GENOMIC DNA]</scope>
    <source>
        <strain>972 / ATCC 24843</strain>
    </source>
</reference>
<reference key="2">
    <citation type="journal article" date="2002" name="Nature">
        <title>The genome sequence of Schizosaccharomyces pombe.</title>
        <authorList>
            <person name="Wood V."/>
            <person name="Gwilliam R."/>
            <person name="Rajandream M.A."/>
            <person name="Lyne M.H."/>
            <person name="Lyne R."/>
            <person name="Stewart A."/>
            <person name="Sgouros J.G."/>
            <person name="Peat N."/>
            <person name="Hayles J."/>
            <person name="Baker S.G."/>
            <person name="Basham D."/>
            <person name="Bowman S."/>
            <person name="Brooks K."/>
            <person name="Brown D."/>
            <person name="Brown S."/>
            <person name="Chillingworth T."/>
            <person name="Churcher C.M."/>
            <person name="Collins M."/>
            <person name="Connor R."/>
            <person name="Cronin A."/>
            <person name="Davis P."/>
            <person name="Feltwell T."/>
            <person name="Fraser A."/>
            <person name="Gentles S."/>
            <person name="Goble A."/>
            <person name="Hamlin N."/>
            <person name="Harris D.E."/>
            <person name="Hidalgo J."/>
            <person name="Hodgson G."/>
            <person name="Holroyd S."/>
            <person name="Hornsby T."/>
            <person name="Howarth S."/>
            <person name="Huckle E.J."/>
            <person name="Hunt S."/>
            <person name="Jagels K."/>
            <person name="James K.D."/>
            <person name="Jones L."/>
            <person name="Jones M."/>
            <person name="Leather S."/>
            <person name="McDonald S."/>
            <person name="McLean J."/>
            <person name="Mooney P."/>
            <person name="Moule S."/>
            <person name="Mungall K.L."/>
            <person name="Murphy L.D."/>
            <person name="Niblett D."/>
            <person name="Odell C."/>
            <person name="Oliver K."/>
            <person name="O'Neil S."/>
            <person name="Pearson D."/>
            <person name="Quail M.A."/>
            <person name="Rabbinowitsch E."/>
            <person name="Rutherford K.M."/>
            <person name="Rutter S."/>
            <person name="Saunders D."/>
            <person name="Seeger K."/>
            <person name="Sharp S."/>
            <person name="Skelton J."/>
            <person name="Simmonds M.N."/>
            <person name="Squares R."/>
            <person name="Squares S."/>
            <person name="Stevens K."/>
            <person name="Taylor K."/>
            <person name="Taylor R.G."/>
            <person name="Tivey A."/>
            <person name="Walsh S.V."/>
            <person name="Warren T."/>
            <person name="Whitehead S."/>
            <person name="Woodward J.R."/>
            <person name="Volckaert G."/>
            <person name="Aert R."/>
            <person name="Robben J."/>
            <person name="Grymonprez B."/>
            <person name="Weltjens I."/>
            <person name="Vanstreels E."/>
            <person name="Rieger M."/>
            <person name="Schaefer M."/>
            <person name="Mueller-Auer S."/>
            <person name="Gabel C."/>
            <person name="Fuchs M."/>
            <person name="Duesterhoeft A."/>
            <person name="Fritzc C."/>
            <person name="Holzer E."/>
            <person name="Moestl D."/>
            <person name="Hilbert H."/>
            <person name="Borzym K."/>
            <person name="Langer I."/>
            <person name="Beck A."/>
            <person name="Lehrach H."/>
            <person name="Reinhardt R."/>
            <person name="Pohl T.M."/>
            <person name="Eger P."/>
            <person name="Zimmermann W."/>
            <person name="Wedler H."/>
            <person name="Wambutt R."/>
            <person name="Purnelle B."/>
            <person name="Goffeau A."/>
            <person name="Cadieu E."/>
            <person name="Dreano S."/>
            <person name="Gloux S."/>
            <person name="Lelaure V."/>
            <person name="Mottier S."/>
            <person name="Galibert F."/>
            <person name="Aves S.J."/>
            <person name="Xiang Z."/>
            <person name="Hunt C."/>
            <person name="Moore K."/>
            <person name="Hurst S.M."/>
            <person name="Lucas M."/>
            <person name="Rochet M."/>
            <person name="Gaillardin C."/>
            <person name="Tallada V.A."/>
            <person name="Garzon A."/>
            <person name="Thode G."/>
            <person name="Daga R.R."/>
            <person name="Cruzado L."/>
            <person name="Jimenez J."/>
            <person name="Sanchez M."/>
            <person name="del Rey F."/>
            <person name="Benito J."/>
            <person name="Dominguez A."/>
            <person name="Revuelta J.L."/>
            <person name="Moreno S."/>
            <person name="Armstrong J."/>
            <person name="Forsburg S.L."/>
            <person name="Cerutti L."/>
            <person name="Lowe T."/>
            <person name="McCombie W.R."/>
            <person name="Paulsen I."/>
            <person name="Potashkin J."/>
            <person name="Shpakovski G.V."/>
            <person name="Ussery D."/>
            <person name="Barrell B.G."/>
            <person name="Nurse P."/>
        </authorList>
    </citation>
    <scope>NUCLEOTIDE SEQUENCE [LARGE SCALE GENOMIC DNA]</scope>
    <source>
        <strain>972 / ATCC 24843</strain>
    </source>
</reference>
<proteinExistence type="inferred from homology"/>
<keyword id="KW-0067">ATP-binding</keyword>
<keyword id="KW-0418">Kinase</keyword>
<keyword id="KW-0469">Meiosis</keyword>
<keyword id="KW-0547">Nucleotide-binding</keyword>
<keyword id="KW-1185">Reference proteome</keyword>
<keyword id="KW-0723">Serine/threonine-protein kinase</keyword>
<keyword id="KW-0808">Transferase</keyword>
<gene>
    <name type="primary">mek1</name>
    <name type="ORF">SPAC14C4.03</name>
</gene>
<sequence>MDFLSHAMLSRSESTQILCELSQIDESTMDPQYTEDDVLARLFVFSSSSPQTVLNVKKYEDVSVGRSNTCNYQLLQFTASYKHFRVYSVLIDDDMDPLVYCEDQSSNGTFLNHRLIGKGNSVLLSDGDILDVRHCASFLFQQKYTTDNDFHHEYAGERFNITQRLLGIGGFSRIYMAMDNNTGGQYACKIIDKKKISTKRFFEDHEMTILRKLDHPNIIKVNMEYNSETQFFIFEEMVTGGDLFSYLTKLGTVPEVTTLFIMFQILQGLKYLHEQNIIHRDLKLENILIASSSDTIFRIILTDFGVARCMQKGKRLSTFVGTPEYTAPEIQRLKGRSQVEKENSSGYGKEVDLWSLGVIMFLLLSGNSPSFADGVKEKQVDFRDPVWKSVSRQAKDLISNLLKTNPPDRFTVKQCLSHPWFARHSSRLTKLYETRILKPLKHSRL</sequence>
<feature type="chain" id="PRO_0000086320" description="Meiosis-specific serine/threonine-protein kinase mek1">
    <location>
        <begin position="1"/>
        <end position="445"/>
    </location>
</feature>
<feature type="domain" description="FHA" evidence="1">
    <location>
        <begin position="62"/>
        <end position="116"/>
    </location>
</feature>
<feature type="domain" description="Protein kinase" evidence="2">
    <location>
        <begin position="160"/>
        <end position="421"/>
    </location>
</feature>
<feature type="active site" description="Proton acceptor" evidence="2 3">
    <location>
        <position position="281"/>
    </location>
</feature>
<feature type="binding site" evidence="2">
    <location>
        <begin position="166"/>
        <end position="174"/>
    </location>
    <ligand>
        <name>ATP</name>
        <dbReference type="ChEBI" id="CHEBI:30616"/>
    </ligand>
</feature>
<feature type="binding site" evidence="2">
    <location>
        <position position="189"/>
    </location>
    <ligand>
        <name>ATP</name>
        <dbReference type="ChEBI" id="CHEBI:30616"/>
    </ligand>
</feature>
<protein>
    <recommendedName>
        <fullName>Meiosis-specific serine/threonine-protein kinase mek1</fullName>
        <ecNumber>2.7.11.1</ecNumber>
    </recommendedName>
</protein>